<gene>
    <name evidence="1" type="primary">secA</name>
    <name type="ordered locus">SGO_0415</name>
</gene>
<organism>
    <name type="scientific">Streptococcus gordonii (strain Challis / ATCC 35105 / BCRC 15272 / CH1 / DL1 / V288)</name>
    <dbReference type="NCBI Taxonomy" id="467705"/>
    <lineage>
        <taxon>Bacteria</taxon>
        <taxon>Bacillati</taxon>
        <taxon>Bacillota</taxon>
        <taxon>Bacilli</taxon>
        <taxon>Lactobacillales</taxon>
        <taxon>Streptococcaceae</taxon>
        <taxon>Streptococcus</taxon>
    </lineage>
</organism>
<keyword id="KW-0067">ATP-binding</keyword>
<keyword id="KW-1003">Cell membrane</keyword>
<keyword id="KW-0963">Cytoplasm</keyword>
<keyword id="KW-0472">Membrane</keyword>
<keyword id="KW-0479">Metal-binding</keyword>
<keyword id="KW-0547">Nucleotide-binding</keyword>
<keyword id="KW-0653">Protein transport</keyword>
<keyword id="KW-1185">Reference proteome</keyword>
<keyword id="KW-1278">Translocase</keyword>
<keyword id="KW-0811">Translocation</keyword>
<keyword id="KW-0813">Transport</keyword>
<keyword id="KW-0862">Zinc</keyword>
<comment type="function">
    <text evidence="1">Part of the Sec protein translocase complex. Interacts with the SecYEG preprotein conducting channel. Has a central role in coupling the hydrolysis of ATP to the transfer of proteins into and across the cell membrane, serving as an ATP-driven molecular motor driving the stepwise translocation of polypeptide chains across the membrane.</text>
</comment>
<comment type="catalytic activity">
    <reaction evidence="1">
        <text>ATP + H2O + cellular proteinSide 1 = ADP + phosphate + cellular proteinSide 2.</text>
        <dbReference type="EC" id="7.4.2.8"/>
    </reaction>
</comment>
<comment type="cofactor">
    <cofactor evidence="1">
        <name>Zn(2+)</name>
        <dbReference type="ChEBI" id="CHEBI:29105"/>
    </cofactor>
    <text evidence="1">May bind 1 zinc ion per subunit.</text>
</comment>
<comment type="subunit">
    <text evidence="1">Monomer and homodimer. Part of the essential Sec protein translocation apparatus which comprises SecA, SecYEG and auxiliary proteins SecDF. Other proteins may also be involved.</text>
</comment>
<comment type="subcellular location">
    <subcellularLocation>
        <location evidence="1">Cell membrane</location>
        <topology evidence="1">Peripheral membrane protein</topology>
        <orientation evidence="1">Cytoplasmic side</orientation>
    </subcellularLocation>
    <subcellularLocation>
        <location evidence="1">Cytoplasm</location>
    </subcellularLocation>
    <text evidence="1">Distribution is 50-50.</text>
</comment>
<comment type="similarity">
    <text evidence="1">Belongs to the SecA family.</text>
</comment>
<name>SECA_STRGC</name>
<feature type="chain" id="PRO_1000087334" description="Protein translocase subunit SecA">
    <location>
        <begin position="1"/>
        <end position="838"/>
    </location>
</feature>
<feature type="binding site" evidence="1">
    <location>
        <position position="85"/>
    </location>
    <ligand>
        <name>ATP</name>
        <dbReference type="ChEBI" id="CHEBI:30616"/>
    </ligand>
</feature>
<feature type="binding site" evidence="1">
    <location>
        <begin position="103"/>
        <end position="107"/>
    </location>
    <ligand>
        <name>ATP</name>
        <dbReference type="ChEBI" id="CHEBI:30616"/>
    </ligand>
</feature>
<feature type="binding site" evidence="1">
    <location>
        <position position="493"/>
    </location>
    <ligand>
        <name>ATP</name>
        <dbReference type="ChEBI" id="CHEBI:30616"/>
    </ligand>
</feature>
<feature type="binding site" evidence="1">
    <location>
        <position position="823"/>
    </location>
    <ligand>
        <name>Zn(2+)</name>
        <dbReference type="ChEBI" id="CHEBI:29105"/>
    </ligand>
</feature>
<feature type="binding site" evidence="1">
    <location>
        <position position="825"/>
    </location>
    <ligand>
        <name>Zn(2+)</name>
        <dbReference type="ChEBI" id="CHEBI:29105"/>
    </ligand>
</feature>
<feature type="binding site" evidence="1">
    <location>
        <position position="834"/>
    </location>
    <ligand>
        <name>Zn(2+)</name>
        <dbReference type="ChEBI" id="CHEBI:29105"/>
    </ligand>
</feature>
<feature type="binding site" evidence="1">
    <location>
        <position position="835"/>
    </location>
    <ligand>
        <name>Zn(2+)</name>
        <dbReference type="ChEBI" id="CHEBI:29105"/>
    </ligand>
</feature>
<proteinExistence type="inferred from homology"/>
<protein>
    <recommendedName>
        <fullName evidence="1">Protein translocase subunit SecA</fullName>
        <ecNumber evidence="1">7.4.2.8</ecNumber>
    </recommendedName>
</protein>
<evidence type="ECO:0000255" key="1">
    <source>
        <dbReference type="HAMAP-Rule" id="MF_01382"/>
    </source>
</evidence>
<dbReference type="EC" id="7.4.2.8" evidence="1"/>
<dbReference type="EMBL" id="CP000725">
    <property type="protein sequence ID" value="ABV11046.1"/>
    <property type="molecule type" value="Genomic_DNA"/>
</dbReference>
<dbReference type="RefSeq" id="WP_011999926.1">
    <property type="nucleotide sequence ID" value="NC_009785.1"/>
</dbReference>
<dbReference type="SMR" id="A8AVC1"/>
<dbReference type="STRING" id="467705.SGO_0415"/>
<dbReference type="KEGG" id="sgo:SGO_0415"/>
<dbReference type="eggNOG" id="COG0653">
    <property type="taxonomic scope" value="Bacteria"/>
</dbReference>
<dbReference type="HOGENOM" id="CLU_005314_3_0_9"/>
<dbReference type="Proteomes" id="UP000001131">
    <property type="component" value="Chromosome"/>
</dbReference>
<dbReference type="GO" id="GO:0031522">
    <property type="term" value="C:cell envelope Sec protein transport complex"/>
    <property type="evidence" value="ECO:0007669"/>
    <property type="project" value="TreeGrafter"/>
</dbReference>
<dbReference type="GO" id="GO:0005829">
    <property type="term" value="C:cytosol"/>
    <property type="evidence" value="ECO:0007669"/>
    <property type="project" value="TreeGrafter"/>
</dbReference>
<dbReference type="GO" id="GO:0005886">
    <property type="term" value="C:plasma membrane"/>
    <property type="evidence" value="ECO:0007669"/>
    <property type="project" value="UniProtKB-SubCell"/>
</dbReference>
<dbReference type="GO" id="GO:0005524">
    <property type="term" value="F:ATP binding"/>
    <property type="evidence" value="ECO:0007669"/>
    <property type="project" value="UniProtKB-UniRule"/>
</dbReference>
<dbReference type="GO" id="GO:0046872">
    <property type="term" value="F:metal ion binding"/>
    <property type="evidence" value="ECO:0007669"/>
    <property type="project" value="UniProtKB-KW"/>
</dbReference>
<dbReference type="GO" id="GO:0008564">
    <property type="term" value="F:protein-exporting ATPase activity"/>
    <property type="evidence" value="ECO:0007669"/>
    <property type="project" value="UniProtKB-EC"/>
</dbReference>
<dbReference type="GO" id="GO:0065002">
    <property type="term" value="P:intracellular protein transmembrane transport"/>
    <property type="evidence" value="ECO:0007669"/>
    <property type="project" value="UniProtKB-UniRule"/>
</dbReference>
<dbReference type="GO" id="GO:0017038">
    <property type="term" value="P:protein import"/>
    <property type="evidence" value="ECO:0007669"/>
    <property type="project" value="InterPro"/>
</dbReference>
<dbReference type="GO" id="GO:0006605">
    <property type="term" value="P:protein targeting"/>
    <property type="evidence" value="ECO:0007669"/>
    <property type="project" value="UniProtKB-UniRule"/>
</dbReference>
<dbReference type="GO" id="GO:0043952">
    <property type="term" value="P:protein transport by the Sec complex"/>
    <property type="evidence" value="ECO:0007669"/>
    <property type="project" value="TreeGrafter"/>
</dbReference>
<dbReference type="CDD" id="cd17928">
    <property type="entry name" value="DEXDc_SecA"/>
    <property type="match status" value="1"/>
</dbReference>
<dbReference type="CDD" id="cd18803">
    <property type="entry name" value="SF2_C_secA"/>
    <property type="match status" value="1"/>
</dbReference>
<dbReference type="FunFam" id="1.10.3060.10:FF:000002">
    <property type="entry name" value="Preprotein translocase subunit SecA"/>
    <property type="match status" value="1"/>
</dbReference>
<dbReference type="FunFam" id="3.40.50.300:FF:000429">
    <property type="entry name" value="Preprotein translocase subunit SecA"/>
    <property type="match status" value="1"/>
</dbReference>
<dbReference type="FunFam" id="3.90.1440.10:FF:000001">
    <property type="entry name" value="Preprotein translocase subunit SecA"/>
    <property type="match status" value="1"/>
</dbReference>
<dbReference type="Gene3D" id="1.10.3060.10">
    <property type="entry name" value="Helical scaffold and wing domains of SecA"/>
    <property type="match status" value="1"/>
</dbReference>
<dbReference type="Gene3D" id="3.40.50.300">
    <property type="entry name" value="P-loop containing nucleotide triphosphate hydrolases"/>
    <property type="match status" value="2"/>
</dbReference>
<dbReference type="Gene3D" id="3.90.1440.10">
    <property type="entry name" value="SecA, preprotein cross-linking domain"/>
    <property type="match status" value="1"/>
</dbReference>
<dbReference type="HAMAP" id="MF_01382">
    <property type="entry name" value="SecA"/>
    <property type="match status" value="1"/>
</dbReference>
<dbReference type="InterPro" id="IPR014001">
    <property type="entry name" value="Helicase_ATP-bd"/>
</dbReference>
<dbReference type="InterPro" id="IPR001650">
    <property type="entry name" value="Helicase_C-like"/>
</dbReference>
<dbReference type="InterPro" id="IPR027417">
    <property type="entry name" value="P-loop_NTPase"/>
</dbReference>
<dbReference type="InterPro" id="IPR004027">
    <property type="entry name" value="SEC_C_motif"/>
</dbReference>
<dbReference type="InterPro" id="IPR000185">
    <property type="entry name" value="SecA"/>
</dbReference>
<dbReference type="InterPro" id="IPR020937">
    <property type="entry name" value="SecA_CS"/>
</dbReference>
<dbReference type="InterPro" id="IPR011115">
    <property type="entry name" value="SecA_DEAD"/>
</dbReference>
<dbReference type="InterPro" id="IPR014018">
    <property type="entry name" value="SecA_motor_DEAD"/>
</dbReference>
<dbReference type="InterPro" id="IPR011130">
    <property type="entry name" value="SecA_preprotein_X-link_dom"/>
</dbReference>
<dbReference type="InterPro" id="IPR044722">
    <property type="entry name" value="SecA_SF2_C"/>
</dbReference>
<dbReference type="InterPro" id="IPR011116">
    <property type="entry name" value="SecA_Wing/Scaffold"/>
</dbReference>
<dbReference type="InterPro" id="IPR036266">
    <property type="entry name" value="SecA_Wing/Scaffold_sf"/>
</dbReference>
<dbReference type="InterPro" id="IPR036670">
    <property type="entry name" value="SecA_X-link_sf"/>
</dbReference>
<dbReference type="NCBIfam" id="NF006630">
    <property type="entry name" value="PRK09200.1"/>
    <property type="match status" value="1"/>
</dbReference>
<dbReference type="NCBIfam" id="TIGR00963">
    <property type="entry name" value="secA"/>
    <property type="match status" value="1"/>
</dbReference>
<dbReference type="PANTHER" id="PTHR30612:SF0">
    <property type="entry name" value="CHLOROPLAST PROTEIN-TRANSPORTING ATPASE"/>
    <property type="match status" value="1"/>
</dbReference>
<dbReference type="PANTHER" id="PTHR30612">
    <property type="entry name" value="SECA INNER MEMBRANE COMPONENT OF SEC PROTEIN SECRETION SYSTEM"/>
    <property type="match status" value="1"/>
</dbReference>
<dbReference type="Pfam" id="PF21090">
    <property type="entry name" value="P-loop_SecA"/>
    <property type="match status" value="2"/>
</dbReference>
<dbReference type="Pfam" id="PF02810">
    <property type="entry name" value="SEC-C"/>
    <property type="match status" value="1"/>
</dbReference>
<dbReference type="Pfam" id="PF07517">
    <property type="entry name" value="SecA_DEAD"/>
    <property type="match status" value="1"/>
</dbReference>
<dbReference type="Pfam" id="PF01043">
    <property type="entry name" value="SecA_PP_bind"/>
    <property type="match status" value="1"/>
</dbReference>
<dbReference type="Pfam" id="PF07516">
    <property type="entry name" value="SecA_SW"/>
    <property type="match status" value="1"/>
</dbReference>
<dbReference type="PRINTS" id="PR00906">
    <property type="entry name" value="SECA"/>
</dbReference>
<dbReference type="SMART" id="SM00957">
    <property type="entry name" value="SecA_DEAD"/>
    <property type="match status" value="1"/>
</dbReference>
<dbReference type="SMART" id="SM00958">
    <property type="entry name" value="SecA_PP_bind"/>
    <property type="match status" value="1"/>
</dbReference>
<dbReference type="SUPFAM" id="SSF81886">
    <property type="entry name" value="Helical scaffold and wing domains of SecA"/>
    <property type="match status" value="1"/>
</dbReference>
<dbReference type="SUPFAM" id="SSF52540">
    <property type="entry name" value="P-loop containing nucleoside triphosphate hydrolases"/>
    <property type="match status" value="2"/>
</dbReference>
<dbReference type="SUPFAM" id="SSF81767">
    <property type="entry name" value="Pre-protein crosslinking domain of SecA"/>
    <property type="match status" value="1"/>
</dbReference>
<dbReference type="PROSITE" id="PS01312">
    <property type="entry name" value="SECA"/>
    <property type="match status" value="1"/>
</dbReference>
<dbReference type="PROSITE" id="PS51196">
    <property type="entry name" value="SECA_MOTOR_DEAD"/>
    <property type="match status" value="1"/>
</dbReference>
<sequence length="838" mass="94940">MANILRTIIENDKGELRKLEKMANKVIAYSDQMAALSDEELKAKTDEFKQRYQNGESLDDLLYEAFAVVREGAKRVLGLYPYPVQIMGGIVLHHGDVPEMRTGEGKTLTATMPVYLNALAGEGVHVVTVNEYLTERDATEMGELYSWLGLSVGINLAAKSPAEKREAYACDITYSTNSEIGFDYLRDNMVVRAENMVQRPLNYALVDEVDSILIDEARTPLIVSGPVSSETNQLYHMADSFVKSLNKDDYIIDVPSKTIGLSDSGIDKAESYFKLDNLYDIENVALTHFIDNALRANYIMILDIDYVVSEEQEILIVDQFTGRTMEGRRYSDGLHQAIEAKEGVPVQDETKTSASITYQNLFRMYKKLSGMTGTAKTEEEEFRETYNIRVIPIPTNRPIARIDHEDLLYPSLESKFKAVVEDVKERHLKGQPVLVGTVAVETSDYLSKKLVAAGIPHEVLNAKNHYREAQIIMNAGQRGAVTIATNMAGRGTDIKLGEGVRELGGLCVIGTERHESRRIDNQLRGRSGRQGDPGESQFYLSLEDELMRRFGSERIKAVLDRFKLSEEESVIKSKMFTRQVEAAQKRVEGNNYDTRKQVLQYDDVMREQREIIYAERHDVITANRDLAPEIHAMIKRTIDRFVDGNSRAPQEEKLDSILYFAKYNLVPEESISLSDLQGLSDEEIKASLYERALEVYNSQIAKLRDEEAVREFQKVLILRVVDNKWTDHIDALDQLRNAVGLRGYAQNNPVVEYQSESFRMFNDMIGSIEFDVTRLMMKAQIHEQERPRTEHNIVTTATRNISAQESDLPADVDLAKVGRNELCPCGSGKKFKNCHGRR</sequence>
<reference key="1">
    <citation type="journal article" date="2007" name="J. Bacteriol.">
        <title>Genome-wide transcriptional changes in Streptococcus gordonii in response to competence signaling peptide.</title>
        <authorList>
            <person name="Vickerman M.M."/>
            <person name="Iobst S."/>
            <person name="Jesionowski A.M."/>
            <person name="Gill S.R."/>
        </authorList>
    </citation>
    <scope>NUCLEOTIDE SEQUENCE [LARGE SCALE GENOMIC DNA]</scope>
    <source>
        <strain>Challis / ATCC 35105 / BCRC 15272 / CH1 / DL1 / V288</strain>
    </source>
</reference>
<accession>A8AVC1</accession>